<gene>
    <name evidence="1" type="primary">bshC</name>
    <name type="ordered locus">ABC2366</name>
</gene>
<feature type="chain" id="PRO_0000378217" description="Putative cysteine ligase BshC">
    <location>
        <begin position="1"/>
        <end position="540"/>
    </location>
</feature>
<feature type="coiled-coil region" evidence="1">
    <location>
        <begin position="457"/>
        <end position="477"/>
    </location>
</feature>
<organism>
    <name type="scientific">Shouchella clausii (strain KSM-K16)</name>
    <name type="common">Alkalihalobacillus clausii</name>
    <dbReference type="NCBI Taxonomy" id="66692"/>
    <lineage>
        <taxon>Bacteria</taxon>
        <taxon>Bacillati</taxon>
        <taxon>Bacillota</taxon>
        <taxon>Bacilli</taxon>
        <taxon>Bacillales</taxon>
        <taxon>Bacillaceae</taxon>
        <taxon>Shouchella</taxon>
    </lineage>
</organism>
<reference key="1">
    <citation type="submission" date="2003-10" db="EMBL/GenBank/DDBJ databases">
        <title>The complete genome sequence of the alkaliphilic Bacillus clausii KSM-K16.</title>
        <authorList>
            <person name="Takaki Y."/>
            <person name="Kageyama Y."/>
            <person name="Shimamura S."/>
            <person name="Suzuki H."/>
            <person name="Nishi S."/>
            <person name="Hatada Y."/>
            <person name="Kawai S."/>
            <person name="Ito S."/>
            <person name="Horikoshi K."/>
        </authorList>
    </citation>
    <scope>NUCLEOTIDE SEQUENCE [LARGE SCALE GENOMIC DNA]</scope>
    <source>
        <strain>KSM-K16</strain>
    </source>
</reference>
<sequence>MRFEALDTRRLTGFLAEYVNQPDQCSDLFSYRWKTNGWEQERSEDLAKRSFSHRQALCRLLEARHAPLRKREACMDNIHKLKQENALVVVAGQQAGLMTGPLYTAYKAMSVILLAKQYEATLNQPVVPLFWIAGEDHDLDEVRYVHYLKGDMWKKLMLGDEPNGEAASTKVLPKKELDTFLAKLFASLPETSYTNTLKAMVTQAAATAGTYTEFFKLLMHELFYREGLLFLDSNDPELRAIERPFFKQLIRKVDALQECQAAGEARFVEKGYPSPIATEKQNAHLFYTLDGKRRRLDYEAGRFYVRETERQFTKEELLAEVDSHPQRFSNNVVTRPLMQEWLLPTLAFVAGPGELAYWATLKDVFALFDYKLTPIIPRLSATFVPCRVEKHLRERKEAAETYILGEGEKLKEAWLASQHSYPVAQRAQAAAEAIEAAHLPFRELAGEISPTLKKMGEKNRAFIQGQIAFLKERMEREIREQHQVGLSKYDEAMTWLHPKDAPQERILHSFILLNTAGIDIFSRLLEKKPPHTGAHLVFYV</sequence>
<proteinExistence type="inferred from homology"/>
<evidence type="ECO:0000255" key="1">
    <source>
        <dbReference type="HAMAP-Rule" id="MF_01867"/>
    </source>
</evidence>
<dbReference type="EC" id="6.-.-.-" evidence="1"/>
<dbReference type="EMBL" id="AP006627">
    <property type="protein sequence ID" value="BAD64901.1"/>
    <property type="molecule type" value="Genomic_DNA"/>
</dbReference>
<dbReference type="RefSeq" id="WP_011247209.1">
    <property type="nucleotide sequence ID" value="NC_006582.1"/>
</dbReference>
<dbReference type="SMR" id="Q5WFF9"/>
<dbReference type="STRING" id="66692.ABC2366"/>
<dbReference type="KEGG" id="bcl:ABC2366"/>
<dbReference type="eggNOG" id="COG4365">
    <property type="taxonomic scope" value="Bacteria"/>
</dbReference>
<dbReference type="HOGENOM" id="CLU_022249_1_0_9"/>
<dbReference type="OrthoDB" id="9765151at2"/>
<dbReference type="Proteomes" id="UP000001168">
    <property type="component" value="Chromosome"/>
</dbReference>
<dbReference type="GO" id="GO:0016874">
    <property type="term" value="F:ligase activity"/>
    <property type="evidence" value="ECO:0007669"/>
    <property type="project" value="UniProtKB-UniRule"/>
</dbReference>
<dbReference type="HAMAP" id="MF_01867">
    <property type="entry name" value="BshC"/>
    <property type="match status" value="1"/>
</dbReference>
<dbReference type="InterPro" id="IPR011199">
    <property type="entry name" value="Bacillithiol_biosynth_BshC"/>
</dbReference>
<dbReference type="InterPro" id="IPR055399">
    <property type="entry name" value="CC_BshC"/>
</dbReference>
<dbReference type="InterPro" id="IPR055398">
    <property type="entry name" value="Rossmann-like_BshC"/>
</dbReference>
<dbReference type="NCBIfam" id="TIGR03998">
    <property type="entry name" value="thiol_BshC"/>
    <property type="match status" value="1"/>
</dbReference>
<dbReference type="Pfam" id="PF24850">
    <property type="entry name" value="CC_BshC"/>
    <property type="match status" value="1"/>
</dbReference>
<dbReference type="Pfam" id="PF10079">
    <property type="entry name" value="Rossmann-like_BshC"/>
    <property type="match status" value="1"/>
</dbReference>
<dbReference type="PIRSF" id="PIRSF012535">
    <property type="entry name" value="UCP012535"/>
    <property type="match status" value="1"/>
</dbReference>
<accession>Q5WFF9</accession>
<keyword id="KW-0175">Coiled coil</keyword>
<keyword id="KW-0436">Ligase</keyword>
<keyword id="KW-1185">Reference proteome</keyword>
<name>BSHC_SHOC1</name>
<protein>
    <recommendedName>
        <fullName evidence="1">Putative cysteine ligase BshC</fullName>
        <ecNumber evidence="1">6.-.-.-</ecNumber>
    </recommendedName>
</protein>
<comment type="function">
    <text evidence="1">Involved in bacillithiol (BSH) biosynthesis. May catalyze the last step of the pathway, the addition of cysteine to glucosamine malate (GlcN-Mal) to generate BSH.</text>
</comment>
<comment type="similarity">
    <text evidence="1">Belongs to the BshC family.</text>
</comment>